<proteinExistence type="inferred from homology"/>
<gene>
    <name evidence="1" type="primary">atpG</name>
    <name type="ordered locus">EHR_08495</name>
</gene>
<protein>
    <recommendedName>
        <fullName evidence="1">ATP synthase gamma chain</fullName>
    </recommendedName>
    <alternativeName>
        <fullName evidence="1">ATP synthase F1 sector gamma subunit</fullName>
    </alternativeName>
    <alternativeName>
        <fullName evidence="1">F-ATPase gamma subunit</fullName>
    </alternativeName>
</protein>
<comment type="function">
    <text evidence="1">Produces ATP from ADP in the presence of a proton gradient across the membrane. The gamma chain is believed to be important in regulating ATPase activity and the flow of protons through the CF(0) complex.</text>
</comment>
<comment type="subunit">
    <text evidence="1">F-type ATPases have 2 components, CF(1) - the catalytic core - and CF(0) - the membrane proton channel. CF(1) has five subunits: alpha(3), beta(3), gamma(1), delta(1), epsilon(1). CF(0) has three main subunits: a, b and c.</text>
</comment>
<comment type="subcellular location">
    <subcellularLocation>
        <location evidence="1">Cell membrane</location>
        <topology evidence="1">Peripheral membrane protein</topology>
    </subcellularLocation>
</comment>
<comment type="similarity">
    <text evidence="1">Belongs to the ATPase gamma chain family.</text>
</comment>
<dbReference type="EMBL" id="M90060">
    <property type="protein sequence ID" value="AAA26858.1"/>
    <property type="molecule type" value="Genomic_DNA"/>
</dbReference>
<dbReference type="EMBL" id="CP003504">
    <property type="protein sequence ID" value="AFM70624.1"/>
    <property type="molecule type" value="Genomic_DNA"/>
</dbReference>
<dbReference type="RefSeq" id="WP_010737986.1">
    <property type="nucleotide sequence ID" value="NZ_KB946231.1"/>
</dbReference>
<dbReference type="SMR" id="P43452"/>
<dbReference type="KEGG" id="ehr:EHR_08495"/>
<dbReference type="eggNOG" id="COG0224">
    <property type="taxonomic scope" value="Bacteria"/>
</dbReference>
<dbReference type="HOGENOM" id="CLU_050669_0_1_9"/>
<dbReference type="OrthoDB" id="9812769at2"/>
<dbReference type="Proteomes" id="UP000002895">
    <property type="component" value="Chromosome"/>
</dbReference>
<dbReference type="GO" id="GO:0005886">
    <property type="term" value="C:plasma membrane"/>
    <property type="evidence" value="ECO:0007669"/>
    <property type="project" value="UniProtKB-SubCell"/>
</dbReference>
<dbReference type="GO" id="GO:0045259">
    <property type="term" value="C:proton-transporting ATP synthase complex"/>
    <property type="evidence" value="ECO:0007669"/>
    <property type="project" value="UniProtKB-KW"/>
</dbReference>
<dbReference type="GO" id="GO:0005524">
    <property type="term" value="F:ATP binding"/>
    <property type="evidence" value="ECO:0007669"/>
    <property type="project" value="UniProtKB-UniRule"/>
</dbReference>
<dbReference type="GO" id="GO:0046933">
    <property type="term" value="F:proton-transporting ATP synthase activity, rotational mechanism"/>
    <property type="evidence" value="ECO:0007669"/>
    <property type="project" value="UniProtKB-UniRule"/>
</dbReference>
<dbReference type="GO" id="GO:0042777">
    <property type="term" value="P:proton motive force-driven plasma membrane ATP synthesis"/>
    <property type="evidence" value="ECO:0007669"/>
    <property type="project" value="UniProtKB-UniRule"/>
</dbReference>
<dbReference type="CDD" id="cd12151">
    <property type="entry name" value="F1-ATPase_gamma"/>
    <property type="match status" value="1"/>
</dbReference>
<dbReference type="FunFam" id="3.40.1380.10:FF:000002">
    <property type="entry name" value="ATP synthase gamma chain"/>
    <property type="match status" value="1"/>
</dbReference>
<dbReference type="Gene3D" id="3.40.1380.10">
    <property type="match status" value="1"/>
</dbReference>
<dbReference type="Gene3D" id="1.10.287.80">
    <property type="entry name" value="ATP synthase, gamma subunit, helix hairpin domain"/>
    <property type="match status" value="1"/>
</dbReference>
<dbReference type="HAMAP" id="MF_00815">
    <property type="entry name" value="ATP_synth_gamma_bact"/>
    <property type="match status" value="1"/>
</dbReference>
<dbReference type="InterPro" id="IPR035968">
    <property type="entry name" value="ATP_synth_F1_ATPase_gsu"/>
</dbReference>
<dbReference type="InterPro" id="IPR000131">
    <property type="entry name" value="ATP_synth_F1_gsu"/>
</dbReference>
<dbReference type="InterPro" id="IPR023632">
    <property type="entry name" value="ATP_synth_F1_gsu_CS"/>
</dbReference>
<dbReference type="NCBIfam" id="TIGR01146">
    <property type="entry name" value="ATPsyn_F1gamma"/>
    <property type="match status" value="1"/>
</dbReference>
<dbReference type="NCBIfam" id="NF004147">
    <property type="entry name" value="PRK05621.2-1"/>
    <property type="match status" value="1"/>
</dbReference>
<dbReference type="PANTHER" id="PTHR11693">
    <property type="entry name" value="ATP SYNTHASE GAMMA CHAIN"/>
    <property type="match status" value="1"/>
</dbReference>
<dbReference type="PANTHER" id="PTHR11693:SF22">
    <property type="entry name" value="ATP SYNTHASE SUBUNIT GAMMA, MITOCHONDRIAL"/>
    <property type="match status" value="1"/>
</dbReference>
<dbReference type="Pfam" id="PF00231">
    <property type="entry name" value="ATP-synt"/>
    <property type="match status" value="1"/>
</dbReference>
<dbReference type="PRINTS" id="PR00126">
    <property type="entry name" value="ATPASEGAMMA"/>
</dbReference>
<dbReference type="SUPFAM" id="SSF52943">
    <property type="entry name" value="ATP synthase (F1-ATPase), gamma subunit"/>
    <property type="match status" value="1"/>
</dbReference>
<dbReference type="PROSITE" id="PS00153">
    <property type="entry name" value="ATPASE_GAMMA"/>
    <property type="match status" value="1"/>
</dbReference>
<sequence length="300" mass="33049">MGASLNEIKTRIASTKKTSQITRAMQMVSASKLTKSEASSQKFQIYANKVREIVTHLTATQLNDIASDNPRGDINYNSMLISRPVKKTGYIVITADGGLVGGYNSSILKQTMSILEEDHKSPDDYVMIAIGGTGADFFKARGINLAYELRNLSDQPSFDEVRKIVGMATTMYQNEVFDELYVCYNHHINSLTSQFRVEKMLPISDLDPEEATTFDQEYIFEPSKEEILAQLLPQYAESLIYGAIVDAKTAEHAAGMTAMKTATDNAATIIDDLTVSYNRARQGAITQEITEIVAGASALE</sequence>
<name>ATPG_ENTHA</name>
<feature type="chain" id="PRO_0000073280" description="ATP synthase gamma chain">
    <location>
        <begin position="1"/>
        <end position="300"/>
    </location>
</feature>
<accession>P43452</accession>
<accession>I6TBE5</accession>
<reference key="1">
    <citation type="journal article" date="1992" name="J. Bacteriol.">
        <title>Gene structure of Enterococcus hirae (Streptococcus faecalis) F1F0-ATPase, which functions as a regulator of cytoplasmic pH.</title>
        <authorList>
            <person name="Shibata C."/>
            <person name="Ehara T."/>
            <person name="Tomura K."/>
            <person name="Igarashi K."/>
            <person name="Kobayashi H."/>
        </authorList>
    </citation>
    <scope>NUCLEOTIDE SEQUENCE [GENOMIC DNA]</scope>
    <source>
        <strain>ATCC 9790 / DSM 20160 / JCM 8729 / LMG 6399 / NBRC 3181 / NCIMB 6459 / NCDO 1258 / NCTC 12367 / WDCM 00089 / R</strain>
    </source>
</reference>
<reference key="2">
    <citation type="journal article" date="2012" name="J. Bacteriol.">
        <title>Genome sequence of Enterococcus hirae (Streptococcus faecalis) ATCC 9790, a model organism for the study of ion transport, bioenergetics, and copper homeostasis.</title>
        <authorList>
            <person name="Gaechter T."/>
            <person name="Wunderlin C."/>
            <person name="Schmidheini T."/>
            <person name="Solioz M."/>
        </authorList>
    </citation>
    <scope>NUCLEOTIDE SEQUENCE [LARGE SCALE GENOMIC DNA]</scope>
    <source>
        <strain>ATCC 9790 / DSM 20160 / JCM 8729 / LMG 6399 / NBRC 3181 / NCIMB 6459 / NCDO 1258 / NCTC 12367 / WDCM 00089 / R</strain>
    </source>
</reference>
<organism>
    <name type="scientific">Enterococcus hirae (strain ATCC 9790 / DSM 20160 / JCM 8729 / LMG 6399 / NBRC 3181 / NCIMB 6459 / NCDO 1258 / NCTC 12367 / WDCM 00089 / R)</name>
    <dbReference type="NCBI Taxonomy" id="768486"/>
    <lineage>
        <taxon>Bacteria</taxon>
        <taxon>Bacillati</taxon>
        <taxon>Bacillota</taxon>
        <taxon>Bacilli</taxon>
        <taxon>Lactobacillales</taxon>
        <taxon>Enterococcaceae</taxon>
        <taxon>Enterococcus</taxon>
    </lineage>
</organism>
<keyword id="KW-0066">ATP synthesis</keyword>
<keyword id="KW-1003">Cell membrane</keyword>
<keyword id="KW-0139">CF(1)</keyword>
<keyword id="KW-0375">Hydrogen ion transport</keyword>
<keyword id="KW-0406">Ion transport</keyword>
<keyword id="KW-0472">Membrane</keyword>
<keyword id="KW-0813">Transport</keyword>
<evidence type="ECO:0000255" key="1">
    <source>
        <dbReference type="HAMAP-Rule" id="MF_00815"/>
    </source>
</evidence>